<proteinExistence type="evidence at protein level"/>
<dbReference type="EC" id="1.14.13.22"/>
<dbReference type="EMBL" id="M19029">
    <property type="protein sequence ID" value="AAA21892.1"/>
    <property type="molecule type" value="Genomic_DNA"/>
</dbReference>
<dbReference type="PIR" id="A28550">
    <property type="entry name" value="A28550"/>
</dbReference>
<dbReference type="SMR" id="P12015"/>
<dbReference type="GO" id="GO:0018667">
    <property type="term" value="F:cyclohexanone monooxygenase activity"/>
    <property type="evidence" value="ECO:0007669"/>
    <property type="project" value="UniProtKB-EC"/>
</dbReference>
<dbReference type="GO" id="GO:0050660">
    <property type="term" value="F:flavin adenine dinucleotide binding"/>
    <property type="evidence" value="ECO:0007669"/>
    <property type="project" value="InterPro"/>
</dbReference>
<dbReference type="GO" id="GO:0004499">
    <property type="term" value="F:N,N-dimethylaniline monooxygenase activity"/>
    <property type="evidence" value="ECO:0007669"/>
    <property type="project" value="InterPro"/>
</dbReference>
<dbReference type="GO" id="GO:0050661">
    <property type="term" value="F:NADP binding"/>
    <property type="evidence" value="ECO:0007669"/>
    <property type="project" value="InterPro"/>
</dbReference>
<dbReference type="GO" id="GO:0009056">
    <property type="term" value="P:catabolic process"/>
    <property type="evidence" value="ECO:0007669"/>
    <property type="project" value="UniProtKB-KW"/>
</dbReference>
<dbReference type="Gene3D" id="3.50.50.60">
    <property type="entry name" value="FAD/NAD(P)-binding domain"/>
    <property type="match status" value="2"/>
</dbReference>
<dbReference type="InterPro" id="IPR050775">
    <property type="entry name" value="FAD-binding_Monooxygenases"/>
</dbReference>
<dbReference type="InterPro" id="IPR036188">
    <property type="entry name" value="FAD/NAD-bd_sf"/>
</dbReference>
<dbReference type="InterPro" id="IPR020946">
    <property type="entry name" value="Flavin_mOase-like"/>
</dbReference>
<dbReference type="PANTHER" id="PTHR43098:SF5">
    <property type="entry name" value="DUAL-FUNCTIONAL MONOOXYGENASE_METHYLTRANSFERASE PSOF"/>
    <property type="match status" value="1"/>
</dbReference>
<dbReference type="PANTHER" id="PTHR43098">
    <property type="entry name" value="L-ORNITHINE N(5)-MONOOXYGENASE-RELATED"/>
    <property type="match status" value="1"/>
</dbReference>
<dbReference type="Pfam" id="PF00743">
    <property type="entry name" value="FMO-like"/>
    <property type="match status" value="1"/>
</dbReference>
<dbReference type="SUPFAM" id="SSF51905">
    <property type="entry name" value="FAD/NAD(P)-binding domain"/>
    <property type="match status" value="2"/>
</dbReference>
<keyword id="KW-0058">Aromatic hydrocarbons catabolism</keyword>
<keyword id="KW-0903">Direct protein sequencing</keyword>
<keyword id="KW-0274">FAD</keyword>
<keyword id="KW-0285">Flavoprotein</keyword>
<keyword id="KW-0503">Monooxygenase</keyword>
<keyword id="KW-0521">NADP</keyword>
<keyword id="KW-0560">Oxidoreductase</keyword>
<name>CHMO_ACISP</name>
<reference key="1">
    <citation type="journal article" date="1988" name="J. Bacteriol.">
        <title>Acinetobacter cyclohexanone monooxygenase: gene cloning and sequence determination.</title>
        <authorList>
            <person name="Chen Y.-C.J."/>
            <person name="Peoples O.P."/>
            <person name="Walsh C.T."/>
        </authorList>
    </citation>
    <scope>NUCLEOTIDE SEQUENCE [GENOMIC DNA]</scope>
    <scope>PROTEIN SEQUENCE OF 2-12</scope>
    <source>
        <strain>NCIB 9871</strain>
    </source>
</reference>
<sequence>MSQKMDFDAIVIGGGFGGLYAVKKLRDELELKVQAFDKATDVAGTWYWNRYPGALTDTETHLYCYSWDKELLQSLEIKKKYVQGPDVRKYLQQVAEKHDLKKSYQFNTAVQSAHYNEADALWEVTTEYGDKYTARFLITALGLLSAPNLPNIKGINQFKGELHHTSRWPDDVSFEGKRVGVIGTGSTGVQVITAVAPLAKHLTVFQRSAQYSVPIGNDPLSEEDVKKIKDNYDKSLGWCMNSALAFALNESTVPAMSVSAEERKAVFEKAWQTGGGFRFMFETFGDIATNMEANIEAQNFIKGKIAEIVKDPAIAQKLMPQDLYAKRPLCDSGYYNTFNRDNVRLEDVKANPIVEITENGVKLENGDFVELDMLICATGFDAVDGNYVRMDIQGKNGLAMKDYWKEGPSSYMGVTVNNYPNMFMVLGPNGPFTNLPPSIESQVEWISDTIQYTVENNVESIEATKEAEEQWTQTCANIAEMTLFPKAQSWIFGANIPGKKNTVYFYLGGLKEYRTCASNCKNHAYEGFDIQLQRSDIKQPANA</sequence>
<evidence type="ECO:0000250" key="1"/>
<evidence type="ECO:0000255" key="2"/>
<evidence type="ECO:0000269" key="3">
    <source>
    </source>
</evidence>
<evidence type="ECO:0000305" key="4"/>
<organism>
    <name type="scientific">Acinetobacter sp</name>
    <dbReference type="NCBI Taxonomy" id="472"/>
    <lineage>
        <taxon>Bacteria</taxon>
        <taxon>Pseudomonadati</taxon>
        <taxon>Pseudomonadota</taxon>
        <taxon>Gammaproteobacteria</taxon>
        <taxon>Moraxellales</taxon>
        <taxon>Moraxellaceae</taxon>
        <taxon>Acinetobacter</taxon>
    </lineage>
</organism>
<comment type="catalytic activity">
    <reaction>
        <text>cyclohexanone + NADPH + O2 + H(+) = hexano-6-lactone + NADP(+) + H2O</text>
        <dbReference type="Rhea" id="RHEA:24068"/>
        <dbReference type="ChEBI" id="CHEBI:15377"/>
        <dbReference type="ChEBI" id="CHEBI:15378"/>
        <dbReference type="ChEBI" id="CHEBI:15379"/>
        <dbReference type="ChEBI" id="CHEBI:17854"/>
        <dbReference type="ChEBI" id="CHEBI:17915"/>
        <dbReference type="ChEBI" id="CHEBI:57783"/>
        <dbReference type="ChEBI" id="CHEBI:58349"/>
        <dbReference type="EC" id="1.14.13.22"/>
    </reaction>
</comment>
<comment type="cofactor">
    <cofactor>
        <name>FAD</name>
        <dbReference type="ChEBI" id="CHEBI:57692"/>
    </cofactor>
</comment>
<comment type="similarity">
    <text evidence="4">Belongs to the FAD-binding monooxygenase family.</text>
</comment>
<protein>
    <recommendedName>
        <fullName>Cyclohexanone 1,2-monooxygenase</fullName>
        <ecNumber>1.14.13.22</ecNumber>
    </recommendedName>
</protein>
<accession>P12015</accession>
<feature type="initiator methionine" description="Removed" evidence="3">
    <location>
        <position position="1"/>
    </location>
</feature>
<feature type="chain" id="PRO_0000186455" description="Cyclohexanone 1,2-monooxygenase">
    <location>
        <begin position="2"/>
        <end position="543"/>
    </location>
</feature>
<feature type="binding site" evidence="1">
    <location>
        <position position="16"/>
    </location>
    <ligand>
        <name>FAD</name>
        <dbReference type="ChEBI" id="CHEBI:57692"/>
    </ligand>
</feature>
<feature type="binding site" evidence="1">
    <location>
        <position position="37"/>
    </location>
    <ligand>
        <name>FAD</name>
        <dbReference type="ChEBI" id="CHEBI:57692"/>
    </ligand>
</feature>
<feature type="binding site" evidence="1">
    <location>
        <position position="46"/>
    </location>
    <ligand>
        <name>FAD</name>
        <dbReference type="ChEBI" id="CHEBI:57692"/>
    </ligand>
</feature>
<feature type="binding site" evidence="1">
    <location>
        <position position="57"/>
    </location>
    <ligand>
        <name>FAD</name>
        <dbReference type="ChEBI" id="CHEBI:57692"/>
    </ligand>
</feature>
<feature type="binding site" evidence="1">
    <location>
        <position position="63"/>
    </location>
    <ligand>
        <name>FAD</name>
        <dbReference type="ChEBI" id="CHEBI:57692"/>
    </ligand>
</feature>
<feature type="binding site" evidence="1">
    <location>
        <position position="110"/>
    </location>
    <ligand>
        <name>FAD</name>
        <dbReference type="ChEBI" id="CHEBI:57692"/>
    </ligand>
</feature>
<feature type="site" description="Transition state stabilizer" evidence="2">
    <location>
        <position position="327"/>
    </location>
</feature>